<sequence length="453" mass="51540">MELNQVLEKKEQILQYLGTLVGLHEKALSDVNSASQVTSIRKDITICLNDLCRINDLLVSHDGLLKREIGSLLRDKQELLELNEREQLLWKERKSWHIKQETDAAPADYVIDKDAIITISSHHRTSLNKYIESVGAENTILSNTDDSDAMIEEVQNAESSADQMIRNYKLLQLSHKQAKSEIIRLETLLRDFKKDNKFIEEELKRQSGRIRSEMGNIDFHLSKIEESKHQLMKRIGFESPLTQEKSLSEKIFNLRLSSADEDYNERQTINMKNFVHMKDLIELKIEDLQEQLMRNKNESSTVLTQRELWLDCQKKVGDLESKLITKLRSSSNSKIPPNEMSEMINSTIQYLNNLLDSSDEKLTTTLISNERDVLSKACEELHSESTTAQDGSSALPSKPIDIHKSHKGSNASSNLKQPSTPSFLVASKSPPKIGISESVVNANKNDAISKKVE</sequence>
<proteinExistence type="evidence at protein level"/>
<gene>
    <name type="primary">ATG23</name>
    <name type="synonym">CVT23</name>
    <name type="ordered locus">YLR431C</name>
</gene>
<evidence type="ECO:0000255" key="1"/>
<evidence type="ECO:0000256" key="2">
    <source>
        <dbReference type="SAM" id="MobiDB-lite"/>
    </source>
</evidence>
<evidence type="ECO:0000269" key="3">
    <source>
    </source>
</evidence>
<evidence type="ECO:0000269" key="4">
    <source>
    </source>
</evidence>
<evidence type="ECO:0000269" key="5">
    <source>
    </source>
</evidence>
<evidence type="ECO:0000269" key="6">
    <source>
    </source>
</evidence>
<evidence type="ECO:0000269" key="7">
    <source>
    </source>
</evidence>
<evidence type="ECO:0000269" key="8">
    <source>
    </source>
</evidence>
<evidence type="ECO:0000305" key="9"/>
<name>ATG23_YEAST</name>
<accession>Q06671</accession>
<accession>D6VZ66</accession>
<organism>
    <name type="scientific">Saccharomyces cerevisiae (strain ATCC 204508 / S288c)</name>
    <name type="common">Baker's yeast</name>
    <dbReference type="NCBI Taxonomy" id="559292"/>
    <lineage>
        <taxon>Eukaryota</taxon>
        <taxon>Fungi</taxon>
        <taxon>Dikarya</taxon>
        <taxon>Ascomycota</taxon>
        <taxon>Saccharomycotina</taxon>
        <taxon>Saccharomycetes</taxon>
        <taxon>Saccharomycetales</taxon>
        <taxon>Saccharomycetaceae</taxon>
        <taxon>Saccharomyces</taxon>
    </lineage>
</organism>
<feature type="chain" id="PRO_0000064727" description="Autophagy-related protein 23">
    <location>
        <begin position="1"/>
        <end position="453"/>
    </location>
</feature>
<feature type="region of interest" description="Disordered" evidence="2">
    <location>
        <begin position="381"/>
        <end position="428"/>
    </location>
</feature>
<feature type="region of interest" description="Disordered" evidence="2">
    <location>
        <begin position="434"/>
        <end position="453"/>
    </location>
</feature>
<feature type="coiled-coil region" evidence="1">
    <location>
        <begin position="144"/>
        <end position="213"/>
    </location>
</feature>
<feature type="coiled-coil region" evidence="1">
    <location>
        <begin position="272"/>
        <end position="302"/>
    </location>
</feature>
<feature type="compositionally biased region" description="Polar residues" evidence="2">
    <location>
        <begin position="384"/>
        <end position="395"/>
    </location>
</feature>
<feature type="compositionally biased region" description="Polar residues" evidence="2">
    <location>
        <begin position="408"/>
        <end position="422"/>
    </location>
</feature>
<reference key="1">
    <citation type="journal article" date="1997" name="Nature">
        <title>The nucleotide sequence of Saccharomyces cerevisiae chromosome XII.</title>
        <authorList>
            <person name="Johnston M."/>
            <person name="Hillier L.W."/>
            <person name="Riles L."/>
            <person name="Albermann K."/>
            <person name="Andre B."/>
            <person name="Ansorge W."/>
            <person name="Benes V."/>
            <person name="Brueckner M."/>
            <person name="Delius H."/>
            <person name="Dubois E."/>
            <person name="Duesterhoeft A."/>
            <person name="Entian K.-D."/>
            <person name="Floeth M."/>
            <person name="Goffeau A."/>
            <person name="Hebling U."/>
            <person name="Heumann K."/>
            <person name="Heuss-Neitzel D."/>
            <person name="Hilbert H."/>
            <person name="Hilger F."/>
            <person name="Kleine K."/>
            <person name="Koetter P."/>
            <person name="Louis E.J."/>
            <person name="Messenguy F."/>
            <person name="Mewes H.-W."/>
            <person name="Miosga T."/>
            <person name="Moestl D."/>
            <person name="Mueller-Auer S."/>
            <person name="Nentwich U."/>
            <person name="Obermaier B."/>
            <person name="Piravandi E."/>
            <person name="Pohl T.M."/>
            <person name="Portetelle D."/>
            <person name="Purnelle B."/>
            <person name="Rechmann S."/>
            <person name="Rieger M."/>
            <person name="Rinke M."/>
            <person name="Rose M."/>
            <person name="Scharfe M."/>
            <person name="Scherens B."/>
            <person name="Scholler P."/>
            <person name="Schwager C."/>
            <person name="Schwarz S."/>
            <person name="Underwood A.P."/>
            <person name="Urrestarazu L.A."/>
            <person name="Vandenbol M."/>
            <person name="Verhasselt P."/>
            <person name="Vierendeels F."/>
            <person name="Voet M."/>
            <person name="Volckaert G."/>
            <person name="Voss H."/>
            <person name="Wambutt R."/>
            <person name="Wedler E."/>
            <person name="Wedler H."/>
            <person name="Zimmermann F.K."/>
            <person name="Zollner A."/>
            <person name="Hani J."/>
            <person name="Hoheisel J.D."/>
        </authorList>
    </citation>
    <scope>NUCLEOTIDE SEQUENCE [LARGE SCALE GENOMIC DNA]</scope>
    <source>
        <strain>ATCC 204508 / S288c</strain>
    </source>
</reference>
<reference key="2">
    <citation type="journal article" date="2014" name="G3 (Bethesda)">
        <title>The reference genome sequence of Saccharomyces cerevisiae: Then and now.</title>
        <authorList>
            <person name="Engel S.R."/>
            <person name="Dietrich F.S."/>
            <person name="Fisk D.G."/>
            <person name="Binkley G."/>
            <person name="Balakrishnan R."/>
            <person name="Costanzo M.C."/>
            <person name="Dwight S.S."/>
            <person name="Hitz B.C."/>
            <person name="Karra K."/>
            <person name="Nash R.S."/>
            <person name="Weng S."/>
            <person name="Wong E.D."/>
            <person name="Lloyd P."/>
            <person name="Skrzypek M.S."/>
            <person name="Miyasato S.R."/>
            <person name="Simison M."/>
            <person name="Cherry J.M."/>
        </authorList>
    </citation>
    <scope>GENOME REANNOTATION</scope>
    <source>
        <strain>ATCC 204508 / S288c</strain>
    </source>
</reference>
<reference key="3">
    <citation type="journal article" date="2003" name="Dev. Cell">
        <title>A unified nomenclature for yeast autophagy-related genes.</title>
        <authorList>
            <person name="Klionsky D.J."/>
            <person name="Cregg J.M."/>
            <person name="Dunn W.A. Jr."/>
            <person name="Emr S.D."/>
            <person name="Sakai Y."/>
            <person name="Sandoval I.V."/>
            <person name="Sibirny A."/>
            <person name="Subramani S."/>
            <person name="Thumm M."/>
            <person name="Veenhuis M."/>
            <person name="Ohsumi Y."/>
        </authorList>
    </citation>
    <scope>NOMENCLATURE</scope>
</reference>
<reference key="4">
    <citation type="journal article" date="2003" name="J. Biol. Chem.">
        <title>Atg23 is essential for the cytoplasm to vacuole targeting pathway and efficient autophagy but not pexophagy.</title>
        <authorList>
            <person name="Tucker K.A."/>
            <person name="Reggiori F."/>
            <person name="Dunn W.A. Jr."/>
            <person name="Klionsky D.J."/>
        </authorList>
    </citation>
    <scope>FUNCTION</scope>
    <scope>SUBCELLULAR LOCATION</scope>
    <scope>INTERACTION WITH ATG9</scope>
</reference>
<reference key="5">
    <citation type="journal article" date="2003" name="Nature">
        <title>Global analysis of protein expression in yeast.</title>
        <authorList>
            <person name="Ghaemmaghami S."/>
            <person name="Huh W.-K."/>
            <person name="Bower K."/>
            <person name="Howson R.W."/>
            <person name="Belle A."/>
            <person name="Dephoure N."/>
            <person name="O'Shea E.K."/>
            <person name="Weissman J.S."/>
        </authorList>
    </citation>
    <scope>LEVEL OF PROTEIN EXPRESSION [LARGE SCALE ANALYSIS]</scope>
</reference>
<reference key="6">
    <citation type="journal article" date="2004" name="Dev. Cell">
        <title>The Atg1-Atg13 complex regulates Atg9 and Atg23 retrieval transport from the pre-autophagosomal structure.</title>
        <authorList>
            <person name="Reggiori F."/>
            <person name="Tucker K.A."/>
            <person name="Stromhaug P.E."/>
            <person name="Klionsky D.J."/>
        </authorList>
    </citation>
    <scope>FUNCTION</scope>
    <scope>SUBCELLULAR LOCATION</scope>
</reference>
<reference key="7">
    <citation type="journal article" date="2004" name="FEMS Yeast Res.">
        <title>ATG23, a novel gene required for maturation of proaminopeptidase I, but not for autophagy.</title>
        <authorList>
            <person name="Meiling-Wesse K."/>
            <person name="Bratsika F."/>
            <person name="Thumm M."/>
        </authorList>
    </citation>
    <scope>FUNCTION</scope>
</reference>
<reference key="8">
    <citation type="journal article" date="2007" name="Autophagy">
        <title>A cycling protein complex required for selective autophagy.</title>
        <authorList>
            <person name="Legakis J.E."/>
            <person name="Yen W.L."/>
            <person name="Klionsky D.J."/>
        </authorList>
    </citation>
    <scope>SUBCELLULAR LOCATION</scope>
    <scope>IDENTIFICATION IN THE ATG9-ATG23-ATG27 COMPLEX</scope>
    <scope>FUNCTION</scope>
</reference>
<reference key="9">
    <citation type="journal article" date="2007" name="Autophagy">
        <title>Overexpression of autophagy-related genes inhibits yeast filamentous growth.</title>
        <authorList>
            <person name="Ma J."/>
            <person name="Jin R."/>
            <person name="Dobry C.J."/>
            <person name="Lawson S.K."/>
            <person name="Kumar A."/>
        </authorList>
    </citation>
    <scope>FUNCTION</scope>
</reference>
<reference key="10">
    <citation type="journal article" date="2008" name="Autophagy">
        <title>Localization of autophagy-related proteins in yeast using a versatile plasmid-based resource of fluorescent protein fusions.</title>
        <authorList>
            <person name="Ma J."/>
            <person name="Bharucha N."/>
            <person name="Dobry C.J."/>
            <person name="Frisch R.L."/>
            <person name="Lawson S."/>
            <person name="Kumar A."/>
        </authorList>
    </citation>
    <scope>SUBCELLULAR LOCATION</scope>
</reference>
<comment type="function">
    <text evidence="3 5 6 7 8">Required for cytoplasm to vacuole transport (Cvt) vesicle formation and efficient autophagy. Plays a role in ATG protein retrieval from the pre-autophagosomal structure (PAS) and is especially required for autophagy-dependent cycling of ATG9. Also plays a role in regulation of filamentous growth.</text>
</comment>
<comment type="subunit">
    <text evidence="7">Forms a complex with ATG9 and ATG27.</text>
</comment>
<comment type="subcellular location">
    <subcellularLocation>
        <location>Cytoplasm</location>
    </subcellularLocation>
    <subcellularLocation>
        <location>Preautophagosomal structure membrane</location>
        <topology>Peripheral membrane protein</topology>
    </subcellularLocation>
    <subcellularLocation>
        <location>Membrane</location>
        <topology>Peripheral membrane protein</topology>
    </subcellularLocation>
    <text>Found in pre-autophagosomal structure and other punctate structures. Correct localization of ATG23 to the membranes is strictly dependent of ATG9. Cycling through the pre-autophagosomal structure and correct location to other punctate structures is ATG1- and ATG13-dependent.</text>
</comment>
<comment type="miscellaneous">
    <text evidence="4">Present with 538 molecules/cell in log phase SD medium.</text>
</comment>
<comment type="similarity">
    <text evidence="9">Belongs to the ATG23 family.</text>
</comment>
<keyword id="KW-0072">Autophagy</keyword>
<keyword id="KW-0175">Coiled coil</keyword>
<keyword id="KW-0963">Cytoplasm</keyword>
<keyword id="KW-0472">Membrane</keyword>
<keyword id="KW-0653">Protein transport</keyword>
<keyword id="KW-1185">Reference proteome</keyword>
<keyword id="KW-0813">Transport</keyword>
<protein>
    <recommendedName>
        <fullName>Autophagy-related protein 23</fullName>
    </recommendedName>
    <alternativeName>
        <fullName>Cytoplasm to vacuole targeting protein 23</fullName>
    </alternativeName>
</protein>
<dbReference type="EMBL" id="U21094">
    <property type="protein sequence ID" value="AAB67517.1"/>
    <property type="molecule type" value="Genomic_DNA"/>
</dbReference>
<dbReference type="EMBL" id="BK006945">
    <property type="protein sequence ID" value="DAA09732.1"/>
    <property type="molecule type" value="Genomic_DNA"/>
</dbReference>
<dbReference type="PIR" id="S59401">
    <property type="entry name" value="S59401"/>
</dbReference>
<dbReference type="RefSeq" id="NP_013535.1">
    <property type="nucleotide sequence ID" value="NM_001182319.1"/>
</dbReference>
<dbReference type="SASBDB" id="Q06671"/>
<dbReference type="SMR" id="Q06671"/>
<dbReference type="BioGRID" id="31690">
    <property type="interactions" value="133"/>
</dbReference>
<dbReference type="FunCoup" id="Q06671">
    <property type="interactions" value="157"/>
</dbReference>
<dbReference type="IntAct" id="Q06671">
    <property type="interactions" value="1"/>
</dbReference>
<dbReference type="STRING" id="4932.YLR431C"/>
<dbReference type="TCDB" id="9.A.15.1.1">
    <property type="family name" value="the autophagy-related phagophore-formation transporter (apt) family"/>
</dbReference>
<dbReference type="iPTMnet" id="Q06671"/>
<dbReference type="PaxDb" id="4932-YLR431C"/>
<dbReference type="PeptideAtlas" id="Q06671"/>
<dbReference type="EnsemblFungi" id="YLR431C_mRNA">
    <property type="protein sequence ID" value="YLR431C"/>
    <property type="gene ID" value="YLR431C"/>
</dbReference>
<dbReference type="GeneID" id="851151"/>
<dbReference type="KEGG" id="sce:YLR431C"/>
<dbReference type="AGR" id="SGD:S000004423"/>
<dbReference type="SGD" id="S000004423">
    <property type="gene designation" value="ATG23"/>
</dbReference>
<dbReference type="VEuPathDB" id="FungiDB:YLR431C"/>
<dbReference type="eggNOG" id="ENOG502RZQ0">
    <property type="taxonomic scope" value="Eukaryota"/>
</dbReference>
<dbReference type="HOGENOM" id="CLU_051067_0_0_1"/>
<dbReference type="InParanoid" id="Q06671"/>
<dbReference type="OMA" id="DLCRIND"/>
<dbReference type="OrthoDB" id="4066450at2759"/>
<dbReference type="BioCyc" id="YEAST:G3O-32490-MONOMER"/>
<dbReference type="BioGRID-ORCS" id="851151">
    <property type="hits" value="5 hits in 10 CRISPR screens"/>
</dbReference>
<dbReference type="PRO" id="PR:Q06671"/>
<dbReference type="Proteomes" id="UP000002311">
    <property type="component" value="Chromosome XII"/>
</dbReference>
<dbReference type="RNAct" id="Q06671">
    <property type="molecule type" value="protein"/>
</dbReference>
<dbReference type="GO" id="GO:0000407">
    <property type="term" value="C:phagophore assembly site"/>
    <property type="evidence" value="ECO:0000314"/>
    <property type="project" value="SGD"/>
</dbReference>
<dbReference type="GO" id="GO:0034045">
    <property type="term" value="C:phagophore assembly site membrane"/>
    <property type="evidence" value="ECO:0007669"/>
    <property type="project" value="UniProtKB-SubCell"/>
</dbReference>
<dbReference type="GO" id="GO:0032258">
    <property type="term" value="P:cytoplasm to vacuole targeting by the Cvt pathway"/>
    <property type="evidence" value="ECO:0000315"/>
    <property type="project" value="SGD"/>
</dbReference>
<dbReference type="GO" id="GO:0044804">
    <property type="term" value="P:nucleophagy"/>
    <property type="evidence" value="ECO:0000315"/>
    <property type="project" value="SGD"/>
</dbReference>
<dbReference type="GO" id="GO:0016239">
    <property type="term" value="P:positive regulation of macroautophagy"/>
    <property type="evidence" value="ECO:0000315"/>
    <property type="project" value="SGD"/>
</dbReference>
<dbReference type="GO" id="GO:0034497">
    <property type="term" value="P:protein localization to phagophore assembly site"/>
    <property type="evidence" value="ECO:0000315"/>
    <property type="project" value="SGD"/>
</dbReference>